<feature type="chain" id="PRO_0000094539" description="Tight junction protein 1">
    <location>
        <begin position="1"/>
        <end position="1769"/>
    </location>
</feature>
<feature type="domain" description="PDZ 1" evidence="6">
    <location>
        <begin position="23"/>
        <end position="110"/>
    </location>
</feature>
<feature type="domain" description="PDZ 2" evidence="6">
    <location>
        <begin position="185"/>
        <end position="263"/>
    </location>
</feature>
<feature type="domain" description="PDZ 3" evidence="6">
    <location>
        <begin position="420"/>
        <end position="501"/>
    </location>
</feature>
<feature type="domain" description="SH3" evidence="7">
    <location>
        <begin position="515"/>
        <end position="583"/>
    </location>
</feature>
<feature type="domain" description="Guanylate kinase-like" evidence="5">
    <location>
        <begin position="609"/>
        <end position="790"/>
    </location>
</feature>
<feature type="domain" description="ZU5" evidence="8">
    <location>
        <begin position="1635"/>
        <end position="1769"/>
    </location>
</feature>
<feature type="region of interest" description="Disordered" evidence="9">
    <location>
        <begin position="102"/>
        <end position="188"/>
    </location>
</feature>
<feature type="region of interest" description="Disordered" evidence="9">
    <location>
        <begin position="295"/>
        <end position="362"/>
    </location>
</feature>
<feature type="region of interest" description="Occludin (OCLN)-binding region" evidence="4">
    <location>
        <begin position="632"/>
        <end position="875"/>
    </location>
</feature>
<feature type="region of interest" description="Disordered" evidence="9">
    <location>
        <begin position="824"/>
        <end position="976"/>
    </location>
</feature>
<feature type="region of interest" description="Disordered" evidence="9">
    <location>
        <begin position="1010"/>
        <end position="1067"/>
    </location>
</feature>
<feature type="region of interest" description="Disordered" evidence="9">
    <location>
        <begin position="1091"/>
        <end position="1212"/>
    </location>
</feature>
<feature type="region of interest" description="Actin-binding region (ABR)" evidence="4">
    <location>
        <begin position="1150"/>
        <end position="1370"/>
    </location>
</feature>
<feature type="region of interest" description="Disordered" evidence="9">
    <location>
        <begin position="1224"/>
        <end position="1261"/>
    </location>
</feature>
<feature type="region of interest" description="Disordered" evidence="9">
    <location>
        <begin position="1273"/>
        <end position="1589"/>
    </location>
</feature>
<feature type="compositionally biased region" description="Basic residues" evidence="9">
    <location>
        <begin position="102"/>
        <end position="112"/>
    </location>
</feature>
<feature type="compositionally biased region" description="Acidic residues" evidence="9">
    <location>
        <begin position="123"/>
        <end position="135"/>
    </location>
</feature>
<feature type="compositionally biased region" description="Basic and acidic residues" evidence="9">
    <location>
        <begin position="148"/>
        <end position="174"/>
    </location>
</feature>
<feature type="compositionally biased region" description="Basic and acidic residues" evidence="9">
    <location>
        <begin position="298"/>
        <end position="326"/>
    </location>
</feature>
<feature type="compositionally biased region" description="Basic and acidic residues" evidence="9">
    <location>
        <begin position="878"/>
        <end position="891"/>
    </location>
</feature>
<feature type="compositionally biased region" description="Low complexity" evidence="9">
    <location>
        <begin position="892"/>
        <end position="905"/>
    </location>
</feature>
<feature type="compositionally biased region" description="Polar residues" evidence="9">
    <location>
        <begin position="933"/>
        <end position="952"/>
    </location>
</feature>
<feature type="compositionally biased region" description="Polar residues" evidence="9">
    <location>
        <begin position="962"/>
        <end position="976"/>
    </location>
</feature>
<feature type="compositionally biased region" description="Basic and acidic residues" evidence="9">
    <location>
        <begin position="1108"/>
        <end position="1124"/>
    </location>
</feature>
<feature type="compositionally biased region" description="Basic and acidic residues" evidence="9">
    <location>
        <begin position="1273"/>
        <end position="1286"/>
    </location>
</feature>
<feature type="compositionally biased region" description="Pro residues" evidence="9">
    <location>
        <begin position="1300"/>
        <end position="1310"/>
    </location>
</feature>
<feature type="compositionally biased region" description="Basic and acidic residues" evidence="9">
    <location>
        <begin position="1335"/>
        <end position="1346"/>
    </location>
</feature>
<feature type="compositionally biased region" description="Polar residues" evidence="9">
    <location>
        <begin position="1387"/>
        <end position="1401"/>
    </location>
</feature>
<feature type="compositionally biased region" description="Basic and acidic residues" evidence="9">
    <location>
        <begin position="1402"/>
        <end position="1419"/>
    </location>
</feature>
<feature type="compositionally biased region" description="Polar residues" evidence="9">
    <location>
        <begin position="1460"/>
        <end position="1471"/>
    </location>
</feature>
<feature type="compositionally biased region" description="Polar residues" evidence="9">
    <location>
        <begin position="1514"/>
        <end position="1523"/>
    </location>
</feature>
<feature type="compositionally biased region" description="Basic and acidic residues" evidence="9">
    <location>
        <begin position="1539"/>
        <end position="1548"/>
    </location>
</feature>
<feature type="modified residue" description="Phosphoserine" evidence="4">
    <location>
        <position position="125"/>
    </location>
</feature>
<feature type="modified residue" description="Phosphotyrosine" evidence="1">
    <location>
        <position position="131"/>
    </location>
</feature>
<feature type="modified residue" description="Phosphoserine" evidence="4">
    <location>
        <position position="174"/>
    </location>
</feature>
<feature type="modified residue" description="Phosphoserine" evidence="4">
    <location>
        <position position="177"/>
    </location>
</feature>
<feature type="modified residue" description="Phosphoserine" evidence="4">
    <location>
        <position position="178"/>
    </location>
</feature>
<feature type="modified residue" description="Phosphothreonine" evidence="4">
    <location>
        <position position="184"/>
    </location>
</feature>
<feature type="modified residue" description="Phosphoserine" evidence="4">
    <location>
        <position position="211"/>
    </location>
</feature>
<feature type="modified residue" description="Phosphoserine" evidence="3">
    <location>
        <position position="240"/>
    </location>
</feature>
<feature type="modified residue" description="Phosphothreonine" evidence="4">
    <location>
        <position position="266"/>
    </location>
</feature>
<feature type="modified residue" description="Phosphoserine" evidence="4">
    <location>
        <position position="274"/>
    </location>
</feature>
<feature type="modified residue" description="Phosphoserine" evidence="4">
    <location>
        <position position="276"/>
    </location>
</feature>
<feature type="modified residue" description="Phosphoserine" evidence="4">
    <location>
        <position position="279"/>
    </location>
</feature>
<feature type="modified residue" description="Phosphoserine" evidence="4">
    <location>
        <position position="283"/>
    </location>
</feature>
<feature type="modified residue" description="Phosphoserine" evidence="4">
    <location>
        <position position="289"/>
    </location>
</feature>
<feature type="modified residue" description="Phosphoserine" evidence="4">
    <location>
        <position position="293"/>
    </location>
</feature>
<feature type="modified residue" description="Phosphoserine" evidence="4">
    <location>
        <position position="296"/>
    </location>
</feature>
<feature type="modified residue" description="Phosphoserine" evidence="4">
    <location>
        <position position="299"/>
    </location>
</feature>
<feature type="modified residue" description="Phosphoserine" evidence="3">
    <location>
        <position position="322"/>
    </location>
</feature>
<feature type="modified residue" description="Phosphoserine" evidence="4">
    <location>
        <position position="328"/>
    </location>
</feature>
<feature type="modified residue" description="Phosphoserine" evidence="4">
    <location>
        <position position="333"/>
    </location>
</feature>
<feature type="modified residue" description="Phosphoserine" evidence="4">
    <location>
        <position position="336"/>
    </location>
</feature>
<feature type="modified residue" description="Phosphoserine" evidence="4">
    <location>
        <position position="352"/>
    </location>
</feature>
<feature type="modified residue" description="Phosphothreonine" evidence="4">
    <location>
        <position position="353"/>
    </location>
</feature>
<feature type="modified residue" description="Phosphoserine" evidence="4">
    <location>
        <position position="616"/>
    </location>
</feature>
<feature type="modified residue" description="Phosphoserine" evidence="4">
    <location>
        <position position="621"/>
    </location>
</feature>
<feature type="modified residue" description="Phosphothreonine" evidence="4">
    <location>
        <position position="808"/>
    </location>
</feature>
<feature type="modified residue" description="Phosphoserine" evidence="3">
    <location>
        <position position="809"/>
    </location>
</feature>
<feature type="modified residue" description="Phosphoserine" evidence="4">
    <location>
        <position position="820"/>
    </location>
</feature>
<feature type="modified residue" description="Phosphotyrosine" evidence="3">
    <location>
        <position position="821"/>
    </location>
</feature>
<feature type="modified residue" description="Phosphoserine" evidence="3">
    <location>
        <position position="823"/>
    </location>
</feature>
<feature type="modified residue" description="Phosphoserine" evidence="1">
    <location>
        <position position="827"/>
    </location>
</feature>
<feature type="modified residue" description="Phosphoserine" evidence="4">
    <location>
        <position position="836"/>
    </location>
</feature>
<feature type="modified residue" description="Phosphothreonine" evidence="1">
    <location>
        <position position="845"/>
    </location>
</feature>
<feature type="modified residue" description="Phosphothreonine" evidence="3">
    <location>
        <position position="847"/>
    </location>
</feature>
<feature type="modified residue" description="Phosphothreonine" evidence="4">
    <location>
        <position position="853"/>
    </location>
</feature>
<feature type="modified residue" description="Phosphothreonine" evidence="4">
    <location>
        <position position="860"/>
    </location>
</feature>
<feature type="modified residue" description="Phosphothreonine" evidence="4">
    <location>
        <position position="867"/>
    </location>
</feature>
<feature type="modified residue" description="Phosphoserine" evidence="4">
    <location>
        <position position="911"/>
    </location>
</feature>
<feature type="modified residue" description="Phosphoserine" evidence="4">
    <location>
        <position position="967"/>
    </location>
</feature>
<feature type="modified residue" description="Phosphoserine" evidence="3">
    <location>
        <position position="1070"/>
    </location>
</feature>
<feature type="modified residue" description="Phosphoserine" evidence="3">
    <location>
        <position position="1138"/>
    </location>
</feature>
<feature type="modified residue" description="Phosphotyrosine" evidence="3">
    <location>
        <position position="1139"/>
    </location>
</feature>
<feature type="modified residue" description="Phosphotyrosine" evidence="3">
    <location>
        <position position="1164"/>
    </location>
</feature>
<feature type="modified residue" description="Phosphotyrosine" evidence="3">
    <location>
        <position position="1353"/>
    </location>
</feature>
<feature type="modified residue" description="Phosphoserine" evidence="4">
    <location>
        <position position="1365"/>
    </location>
</feature>
<feature type="modified residue" description="Phosphoserine" evidence="4">
    <location>
        <position position="1412"/>
    </location>
</feature>
<feature type="modified residue" description="Phosphoserine" evidence="4">
    <location>
        <position position="1546"/>
    </location>
</feature>
<feature type="modified residue" description="Phosphoserine" evidence="4">
    <location>
        <position position="1618"/>
    </location>
</feature>
<gene>
    <name evidence="4" type="primary">TJP1</name>
    <name evidence="19" type="synonym">ZO1</name>
</gene>
<reference key="1">
    <citation type="journal article" date="1999" name="Exp. Cell Res.">
        <title>Molecular characterization of the tight junction protein ZO-1 in MDCK cells.</title>
        <authorList>
            <person name="Gonzalez-Mariscal L."/>
            <person name="Islas S."/>
            <person name="Contreras R.G."/>
            <person name="Garcia-Villegas M.R."/>
            <person name="Betanzos A."/>
            <person name="Vega J."/>
            <person name="Diaz-Quinonez A."/>
            <person name="Martin-Orozco N."/>
            <person name="Ortiz-Navarrete V."/>
            <person name="Cereijido M."/>
            <person name="Valdes J."/>
        </authorList>
    </citation>
    <scope>NUCLEOTIDE SEQUENCE [MRNA]</scope>
    <source>
        <strain>Cocker spaniel</strain>
        <tissue>Kidney</tissue>
    </source>
</reference>
<reference key="2">
    <citation type="journal article" date="1998" name="J. Biol. Chem.">
        <title>The tight junction protein ZO-1 establishes a link between the transmembrane protein occludin and the actin cytoskeleton.</title>
        <authorList>
            <person name="Fanning A.S."/>
            <person name="Jameson B.J."/>
            <person name="Jesaitis L.A."/>
            <person name="Anderson J.M."/>
        </authorList>
    </citation>
    <scope>INTERACTION WITH TJP2; OCLN AND F-ACTIN</scope>
    <scope>FUNCTION</scope>
    <scope>SUBCELLULAR LOCATION</scope>
</reference>
<reference key="3">
    <citation type="journal article" date="1999" name="J. Biol. Chem.">
        <title>Protein interactions at the tight junction. Actin has multiple binding partners, and ZO-1 forms independent complexes with ZO-2 and ZO-3.</title>
        <authorList>
            <person name="Wittchen E.S."/>
            <person name="Haskins J."/>
            <person name="Stevenson B.R."/>
        </authorList>
    </citation>
    <scope>FUNCTION</scope>
    <scope>INTERACTION WITH TJP2 AND TJP3</scope>
</reference>
<reference key="4">
    <citation type="journal article" date="2003" name="Am. J. Hum. Genet.">
        <title>A novel claudin 16 mutation associated with childhood hypercalciuria abolishes binding to ZO-1 and results in lysosomal mistargeting.</title>
        <authorList>
            <person name="Mueller D."/>
            <person name="Kausalya P.J."/>
            <person name="Claverie-Martin F."/>
            <person name="Meij I.C."/>
            <person name="Eggert P."/>
            <person name="Garcia-Nieto V."/>
            <person name="Hunziker W."/>
        </authorList>
    </citation>
    <scope>INTERACTION WITH CLDN16</scope>
    <scope>SUBCELLULAR LOCATION</scope>
</reference>
<reference key="5">
    <citation type="journal article" date="2004" name="J. Biol. Chem.">
        <title>Association of paracellin-1 with ZO-1 augments the reabsorption of divalent cations in renal epithelial cells.</title>
        <authorList>
            <person name="Ikari A."/>
            <person name="Hirai N."/>
            <person name="Shiroma M."/>
            <person name="Harada H."/>
            <person name="Sakai H."/>
            <person name="Hayashi H."/>
            <person name="Suzuki Y."/>
            <person name="Degawa M."/>
            <person name="Takagi K."/>
        </authorList>
    </citation>
    <scope>INTERACTION WITH CLDN16</scope>
    <scope>SUBCELLULAR LOCATION</scope>
</reference>
<reference key="6">
    <citation type="journal article" date="2006" name="Mol. Biol. Cell">
        <title>The heat-shock protein Apg-2 binds to the tight junction protein ZO-1 and regulates transcriptional activity of ZONAB.</title>
        <authorList>
            <person name="Tsapara A."/>
            <person name="Matter K."/>
            <person name="Balda M.S."/>
        </authorList>
    </citation>
    <scope>INTERACTION WITH HSPA4</scope>
</reference>
<reference key="7">
    <citation type="journal article" date="2011" name="Genes Dev.">
        <title>Angiomotin is a novel Hippo pathway component that inhibits YAP oncoprotein.</title>
        <authorList>
            <person name="Zhao B."/>
            <person name="Li L."/>
            <person name="Lu Q."/>
            <person name="Wang L.H."/>
            <person name="Liu C.Y."/>
            <person name="Lei Q."/>
            <person name="Guan K.L."/>
        </authorList>
    </citation>
    <scope>SUBCELLULAR LOCATION</scope>
</reference>
<reference key="8">
    <citation type="journal article" date="2014" name="J. Biol. Chem.">
        <title>ZO proteins redundantly regulate the transcription factor DbpA/ZONAB.</title>
        <authorList>
            <person name="Spadaro D."/>
            <person name="Tapia R."/>
            <person name="Jond L."/>
            <person name="Sudol M."/>
            <person name="Fanning A.S."/>
            <person name="Citi S."/>
        </authorList>
    </citation>
    <scope>FUNCTION</scope>
</reference>
<reference key="9">
    <citation type="journal article" date="2017" name="J. Cell Sci.">
        <title>ZO-1 interactions with F-actin and occludin direct epithelial polarization and single lumen specification in 3D culture.</title>
        <authorList>
            <person name="Odenwald M.A."/>
            <person name="Choi W."/>
            <person name="Buckley A."/>
            <person name="Shashikanth N."/>
            <person name="Joseph N.E."/>
            <person name="Wang Y."/>
            <person name="Warren M.H."/>
            <person name="Buschmann M.M."/>
            <person name="Pavlyuk R."/>
            <person name="Hildebrand J."/>
            <person name="Margolis B."/>
            <person name="Fanning A.S."/>
            <person name="Turner J.R."/>
        </authorList>
    </citation>
    <scope>FUNCTION</scope>
    <scope>DOMAIN</scope>
    <scope>INTERACTION WITH OCLN AND F-ACTIN</scope>
</reference>
<reference key="10">
    <citation type="journal article" date="2024" name="Nature">
        <title>Membrane prewetting by condensates promotes tight-junction belt formation.</title>
        <authorList>
            <person name="Pombo-Garcia K."/>
            <person name="Adame-Arana O."/>
            <person name="Martin-Lemaitre C."/>
            <person name="Juelicher F."/>
            <person name="Honigmann A."/>
        </authorList>
    </citation>
    <scope>FUNCTION</scope>
    <scope>INTERACTION WITH PATJ</scope>
    <scope>SUBCELLULAR LOCATION</scope>
</reference>
<name>ZO1_CANLF</name>
<protein>
    <recommendedName>
        <fullName evidence="4">Tight junction protein 1</fullName>
    </recommendedName>
    <alternativeName>
        <fullName evidence="20">Tight junction protein ZO-1</fullName>
    </alternativeName>
    <alternativeName>
        <fullName evidence="19">Zona occludens protein 1</fullName>
    </alternativeName>
    <alternativeName>
        <fullName evidence="4">Zonula occludens protein 1</fullName>
    </alternativeName>
</protein>
<organism>
    <name type="scientific">Canis lupus familiaris</name>
    <name type="common">Dog</name>
    <name type="synonym">Canis familiaris</name>
    <dbReference type="NCBI Taxonomy" id="9615"/>
    <lineage>
        <taxon>Eukaryota</taxon>
        <taxon>Metazoa</taxon>
        <taxon>Chordata</taxon>
        <taxon>Craniata</taxon>
        <taxon>Vertebrata</taxon>
        <taxon>Euteleostomi</taxon>
        <taxon>Mammalia</taxon>
        <taxon>Eutheria</taxon>
        <taxon>Laurasiatheria</taxon>
        <taxon>Carnivora</taxon>
        <taxon>Caniformia</taxon>
        <taxon>Canidae</taxon>
        <taxon>Canis</taxon>
    </lineage>
</organism>
<comment type="function">
    <text evidence="3 4 15 16 17 18">TJP1, TJP2, and TJP3 are closely related scaffolding proteins that link tight junction (TJ) transmembrane proteins such as claudins, junctional adhesion molecules, and occludin to the actin cytoskeleton (PubMed:10575001, PubMed:27802160, PubMed:9792688). Forms a multistranded TJP1/ZO1 condensate which elongates to form a tight junction belt, the belt is anchored at the apical cell membrane via interaction with PATJ (PubMed:39112699). The tight junction acts to limit movement of substances through the paracellular space and as a boundary between the compositionally distinct apical and basolateral plasma membrane domains of epithelial and endothelial cells. Necessary for lumenogenesis, and particularly efficient epithelial polarization and barrier formation (PubMed:27802160). Plays a role in the regulation of cell migration by targeting CDC42BPBb to the leading edge of migrating cells (By similarity). With TJP2 and TJP3, participates in the junctional retention and stability of the transcription factor DBPA, but is not involved in its shuttling to the nucleus (PubMed:24986862). May play a role in mediating cell morphology changes during ameloblast differentiation via its role in tight junctions (By similarity).</text>
</comment>
<comment type="subunit">
    <text evidence="3 4 10 11 12 13 17 18">Homodimer (By similarity). Forms heterodimers TJP3 (PubMed:10575001). Forms a heterodimer (via PDZ2 domain) with TJP2/ZO2 (via PDZ2 domain) (PubMed:10575001, PubMed:9792688). Interacts with OCLN (PubMed:27802160, PubMed:9792688). Interacts with CALM, claudins, CGN/cingulin, CXADR, GJA12, GJD3 and UBN1 (By similarity). Interacts (via ZU5 domain) with CDC42BPB and MYZAP (By similarity). Interacts (via PDZ domain) with GJA1 (By similarity). Interacts (via PDZ domains) with ANKRD2 (By similarity). Interacts with POPDC1 (via the C-terminus cytoplasmic tail) (By similarity). Interacts with HSPA4 (PubMed:16407410). Interacts with KIRREL1 (By similarity) (PubMed:16407410). Interacts with DLL1 (By similarity). Interacts with USP53 (via the C-terminal region) (By similarity). Interacts with DNMBP (via C-terminal domain); required for the apical cell-cell junction localization of DNMBP (By similarity). Interacts with SPEF1 (By similarity). Interacts (via N-terminus) with CTNNA1 (By similarity). Interacts with CLDN18 (By similarity). Interacts with CLDN16 (via TRV motif); this is a prerequisite for anchoring of CLDN16 at the tight junction. Interacts with PKP1; the interaction facilitates TJP1/ZO-1 localization to the plasma membrane (By similarity). Interacts with PATJ (via PDZ1-6 domains); the interaction is required for attachment and extension of TJP1/ZO1 condensates along the apical cell interface (PubMed:39112699).</text>
</comment>
<comment type="interaction">
    <interactant intactId="EBI-6988333">
        <id>O97758</id>
    </interactant>
    <interactant intactId="EBI-8002398">
        <id>Q2TFN9</id>
        <label>HSPA4</label>
    </interactant>
    <organismsDiffer>false</organismsDiffer>
    <experiments>3</experiments>
</comment>
<comment type="subcellular location">
    <subcellularLocation>
        <location evidence="18">Cell membrane</location>
        <topology evidence="18">Peripheral membrane protein</topology>
        <orientation evidence="18">Cytoplasmic side</orientation>
    </subcellularLocation>
    <subcellularLocation>
        <location evidence="11 12 14 17 18">Cell junction</location>
        <location evidence="11 12 14 17 18">Tight junction</location>
    </subcellularLocation>
    <subcellularLocation>
        <location evidence="2">Cell junction</location>
    </subcellularLocation>
    <subcellularLocation>
        <location evidence="4">Cell junction</location>
        <location evidence="4">Gap junction</location>
    </subcellularLocation>
    <text evidence="4 17 18">Moves from the cytoplasm to the cell membrane concurrently with cell-cell contact (PubMed:9792688). Forms a condensed tight junction-linked belt of protein during junction formation which becomes anchored to the apical cell membrane via interaction with PATJ (PubMed:39112699). Distributed over the entire lateral surface of the plasma membrane and other actin-rich structures (PubMed:9792688). Detected at the leading edge of migrating and wounded cells (By similarity). Colocalizes with SPEF1 at sites of cell-cell contact in intestinal epithelial cells (By similarity).</text>
</comment>
<comment type="domain">
    <text evidence="4">The 244-aa domain between residues 633 and 876 is the primary occludin (OCLN)-binding site and is required for stable association with the tight junction (By similarity).</text>
</comment>
<comment type="domain">
    <text evidence="4 16">The C-terminal region (residues 1151-1372) is an actin-binding region (ABR) that interacts directly with F-actin and plays an important role in the localization of Tjp1 at junctions (PubMed:27802160). The ABR is also required for the localization to puncta at the free edge of cells before initiation of cell-cell contact (By similarity). The ABR is also necessary for Tjp1 recruitment to podosomes (By similarity).</text>
</comment>
<comment type="domain">
    <text evidence="4">The second PDZ domain (PDZ2) mediates homodimerization and heterodimerization with Tjp2 and Tjp3 (By similarity). PDZ2 domain also mediates interaction with Gja12 (By similarity).</text>
</comment>
<comment type="PTM">
    <text evidence="4">Phosphorylated at tyrosine redidues in response to epidermal growth factor (EGF) (By similarity). This response is dependent on an intact actin microfilament system (By similarity). Dephosphorylated by PTPRJ (By similarity).</text>
</comment>
<comment type="similarity">
    <text evidence="21">Belongs to the MAGUK family.</text>
</comment>
<accession>O97758</accession>
<keyword id="KW-0112">Calmodulin-binding</keyword>
<keyword id="KW-0965">Cell junction</keyword>
<keyword id="KW-1003">Cell membrane</keyword>
<keyword id="KW-0303">Gap junction</keyword>
<keyword id="KW-0472">Membrane</keyword>
<keyword id="KW-0597">Phosphoprotein</keyword>
<keyword id="KW-1185">Reference proteome</keyword>
<keyword id="KW-0677">Repeat</keyword>
<keyword id="KW-0728">SH3 domain</keyword>
<keyword id="KW-0796">Tight junction</keyword>
<sequence>MSARAAAAKNTAMEETAIWEQHTVTLHRAPGFGFGIAISGGRDNPHFQSGETSIVISDVLKGGPAEGQLQENDRVAMVNGVSMDNVEHAFAVQQLRKSGKNAKITIRRKKKVQIPVSRPDPEPVSENEDSYDEEVHDPRSSRGGLVSRRSEKSWARDRSASRERSLSPRSDRRSVASSQPPKPTKVTLVKSRKNEEYGLRLASHIFVKEISQDSLAARDGNIQEGDVVLKINGTVTENMSLTDAKTLIERSKGKLKMVVQRDERATLLNVPDLSDSIHSANASERDDISEIQSLASDHSGRSHDRPPRHSRSRSPDQRSEPSDHSRHSPQQPSSGSLRSREEERISKPGAVSTPVKHADDHTHKTVEEVVVERNEKQAPSLPEPKPVYAQVGQPDVDLPVSPSDGVLPNSTHEDGILRPSMKLVKFRKGDSVGLRLAGGNDVGIFVAGVLEDSPAAKEGLEEGDQILRVNNVDFTNIIREEAVLFLLDLPKGEEVTILAQKKKDVYRRIVESDVGDSFYIRTHFEYEKESPYGLSFNKGEVFRVVDTLYNGKLGSWLAIRIGKNHKEVERGIIPNKNRAEQLASVQYTLPKTAGGDRADFWRFRGLRSSKRNLRKSREDLSAQPVQTKFPAYERVVLREAGFLRPVTIFGPIADVAREKLAREEPDIYQIAKSEPRDAGTDQRSSGIIRLHTIKQIIDQDKHALLDVTPNAVDRLNYAQWYPIVVFLNPDSKQGVKTMRMRLCPESRKSARKLYERSHKLRKNNHHLFTTTINLNSMNDGWYGALKEAIQQQQNQLVWVSEGKADGATSDDLDLHDDRLSYLSAPGSEYSMYSTDSRHTSDYEDTDTEGGAYTDQELDETLNDEVGTPPESAITRSSEPVREDSSGMHHENQTYPPYSPQAQPQPIHRIDSPGFKTASQQKAEASSPVPYLSPETNPASSTSAVNHNVTLTNVRLEGPTPAPSTSYSPQADSLRTPSTEAAHIMLRDQEPSLPSHVEPAKVYRKDPYPEEMMRQNHVLKQPAVGHPGQRPDKEPNLSYESQPPYVEKQANRDLEQPTYRYDSSSYTDQFSRNYDHRLRYEERIPTYEEQWSYYDDKQPYQPRPSLDNQHPRDLDSRQHPEESSERGSYPRFEEPAPLSYDSRPRYDQPPRTSTLRHEEQPTPGYDMHNRYRPEAQSYSSAGPKASEPKQYFDQYPRSYEQVPSQGFSSKAGHYEPLHGAAVVPPLIPASQHKPEVLPSNTKPLPPPPTLTEEEEDPAMKPQSVLTRVKMFENKRSASLENKKDENHTAGFKPPEVASKPPGAPIIGPKPTPQNQFSEHDKTLYRIPEPQKPQMKPPEDIVRSNHYDPEEDEEYYRKQLSYFDRRSFENKPSTHIPAGHLSEPAKPVHSQNQTNFSSYSSKGKSPEADAPDRSFGEKRYEPVQATPPPPPLPSQYAQPSQPGTSSSLALHTHAKGAHGEGNSISLDFQNSLVSKPDPPPSQNKPATFRPPNREDTVQSTFYPQKSFPDKAPVNGAEQTQKTVTPAYNRFTPKPYTSSARPFERKFESPKFNHNLLPSETAHKPDLSSKAPASPKTLAKAHSRAQPPEFDSGVETFSIHADKPKYQMNNLSTVPKAIPVSPSAVEEDEDEDGHTVVATARGVFNNNGGVLSSIETGVSIIIPQGAIPEGVEQEIYFKVCRDNSILPPLDKEKGETLLSPLVMCGPHGLKFLKPVELRLPHCASMTPDGWSFALKSSDSSSGDPKTWQNKCLPGDPNYLVGANCVSVLIDHF</sequence>
<evidence type="ECO:0000250" key="1">
    <source>
        <dbReference type="UniProtKB" id="A0A0G2K2P5"/>
    </source>
</evidence>
<evidence type="ECO:0000250" key="2">
    <source>
        <dbReference type="UniProtKB" id="P12830"/>
    </source>
</evidence>
<evidence type="ECO:0000250" key="3">
    <source>
        <dbReference type="UniProtKB" id="P39447"/>
    </source>
</evidence>
<evidence type="ECO:0000250" key="4">
    <source>
        <dbReference type="UniProtKB" id="Q07157"/>
    </source>
</evidence>
<evidence type="ECO:0000255" key="5">
    <source>
        <dbReference type="PROSITE-ProRule" id="PRU00100"/>
    </source>
</evidence>
<evidence type="ECO:0000255" key="6">
    <source>
        <dbReference type="PROSITE-ProRule" id="PRU00143"/>
    </source>
</evidence>
<evidence type="ECO:0000255" key="7">
    <source>
        <dbReference type="PROSITE-ProRule" id="PRU00192"/>
    </source>
</evidence>
<evidence type="ECO:0000255" key="8">
    <source>
        <dbReference type="PROSITE-ProRule" id="PRU00485"/>
    </source>
</evidence>
<evidence type="ECO:0000256" key="9">
    <source>
        <dbReference type="SAM" id="MobiDB-lite"/>
    </source>
</evidence>
<evidence type="ECO:0000269" key="10">
    <source>
    </source>
</evidence>
<evidence type="ECO:0000269" key="11">
    <source>
    </source>
</evidence>
<evidence type="ECO:0000269" key="12">
    <source>
    </source>
</evidence>
<evidence type="ECO:0000269" key="13">
    <source>
    </source>
</evidence>
<evidence type="ECO:0000269" key="14">
    <source>
    </source>
</evidence>
<evidence type="ECO:0000269" key="15">
    <source>
    </source>
</evidence>
<evidence type="ECO:0000269" key="16">
    <source>
    </source>
</evidence>
<evidence type="ECO:0000269" key="17">
    <source>
    </source>
</evidence>
<evidence type="ECO:0000269" key="18">
    <source>
    </source>
</evidence>
<evidence type="ECO:0000303" key="19">
    <source>
    </source>
</evidence>
<evidence type="ECO:0000303" key="20">
    <source>
    </source>
</evidence>
<evidence type="ECO:0000305" key="21"/>
<dbReference type="EMBL" id="U55935">
    <property type="protein sequence ID" value="AAD11529.1"/>
    <property type="molecule type" value="mRNA"/>
</dbReference>
<dbReference type="RefSeq" id="NP_001003140.1">
    <property type="nucleotide sequence ID" value="NM_001003140.1"/>
</dbReference>
<dbReference type="BMRB" id="O97758"/>
<dbReference type="SMR" id="O97758"/>
<dbReference type="BioGRID" id="139675">
    <property type="interactions" value="4"/>
</dbReference>
<dbReference type="CORUM" id="O97758"/>
<dbReference type="FunCoup" id="O97758">
    <property type="interactions" value="1590"/>
</dbReference>
<dbReference type="IntAct" id="O97758">
    <property type="interactions" value="8"/>
</dbReference>
<dbReference type="MINT" id="O97758"/>
<dbReference type="STRING" id="9615.ENSCAFP00000065522"/>
<dbReference type="PaxDb" id="9612-ENSCAFP00000015301"/>
<dbReference type="GeneID" id="403752"/>
<dbReference type="KEGG" id="cfa:403752"/>
<dbReference type="CTD" id="7082"/>
<dbReference type="eggNOG" id="KOG3580">
    <property type="taxonomic scope" value="Eukaryota"/>
</dbReference>
<dbReference type="InParanoid" id="O97758"/>
<dbReference type="OrthoDB" id="418634at2759"/>
<dbReference type="Proteomes" id="UP000002254">
    <property type="component" value="Unplaced"/>
</dbReference>
<dbReference type="Proteomes" id="UP000694429">
    <property type="component" value="Unplaced"/>
</dbReference>
<dbReference type="Proteomes" id="UP000694542">
    <property type="component" value="Unplaced"/>
</dbReference>
<dbReference type="Proteomes" id="UP000805418">
    <property type="component" value="Unplaced"/>
</dbReference>
<dbReference type="GO" id="GO:0005923">
    <property type="term" value="C:bicellular tight junction"/>
    <property type="evidence" value="ECO:0000314"/>
    <property type="project" value="UniProtKB"/>
</dbReference>
<dbReference type="GO" id="GO:0009986">
    <property type="term" value="C:cell surface"/>
    <property type="evidence" value="ECO:0000314"/>
    <property type="project" value="MGI"/>
</dbReference>
<dbReference type="GO" id="GO:0005911">
    <property type="term" value="C:cell-cell junction"/>
    <property type="evidence" value="ECO:0000314"/>
    <property type="project" value="UniProtKB"/>
</dbReference>
<dbReference type="GO" id="GO:0031410">
    <property type="term" value="C:cytoplasmic vesicle"/>
    <property type="evidence" value="ECO:0000314"/>
    <property type="project" value="UniProtKB"/>
</dbReference>
<dbReference type="GO" id="GO:0005921">
    <property type="term" value="C:gap junction"/>
    <property type="evidence" value="ECO:0000250"/>
    <property type="project" value="UniProtKB"/>
</dbReference>
<dbReference type="GO" id="GO:0005886">
    <property type="term" value="C:plasma membrane"/>
    <property type="evidence" value="ECO:0000314"/>
    <property type="project" value="ARUK-UCL"/>
</dbReference>
<dbReference type="GO" id="GO:0070160">
    <property type="term" value="C:tight junction"/>
    <property type="evidence" value="ECO:0000314"/>
    <property type="project" value="ARUK-UCL"/>
</dbReference>
<dbReference type="GO" id="GO:0005516">
    <property type="term" value="F:calmodulin binding"/>
    <property type="evidence" value="ECO:0007669"/>
    <property type="project" value="UniProtKB-KW"/>
</dbReference>
<dbReference type="GO" id="GO:0050839">
    <property type="term" value="F:cell adhesion molecule binding"/>
    <property type="evidence" value="ECO:0000318"/>
    <property type="project" value="GO_Central"/>
</dbReference>
<dbReference type="GO" id="GO:0036305">
    <property type="term" value="P:ameloblast differentiation"/>
    <property type="evidence" value="ECO:0000250"/>
    <property type="project" value="UniProtKB"/>
</dbReference>
<dbReference type="GO" id="GO:0070830">
    <property type="term" value="P:bicellular tight junction assembly"/>
    <property type="evidence" value="ECO:0000314"/>
    <property type="project" value="UniProtKB"/>
</dbReference>
<dbReference type="GO" id="GO:0098609">
    <property type="term" value="P:cell-cell adhesion"/>
    <property type="evidence" value="ECO:0000318"/>
    <property type="project" value="GO_Central"/>
</dbReference>
<dbReference type="GO" id="GO:0045216">
    <property type="term" value="P:cell-cell junction organization"/>
    <property type="evidence" value="ECO:0000318"/>
    <property type="project" value="GO_Central"/>
</dbReference>
<dbReference type="GO" id="GO:0071277">
    <property type="term" value="P:cellular response to calcium ion"/>
    <property type="evidence" value="ECO:0000314"/>
    <property type="project" value="UniProtKB"/>
</dbReference>
<dbReference type="GO" id="GO:0090557">
    <property type="term" value="P:establishment of endothelial intestinal barrier"/>
    <property type="evidence" value="ECO:0000318"/>
    <property type="project" value="GO_Central"/>
</dbReference>
<dbReference type="GO" id="GO:1905605">
    <property type="term" value="P:positive regulation of blood-brain barrier permeability"/>
    <property type="evidence" value="ECO:0000318"/>
    <property type="project" value="GO_Central"/>
</dbReference>
<dbReference type="GO" id="GO:0150105">
    <property type="term" value="P:protein localization to cell-cell junction"/>
    <property type="evidence" value="ECO:0000318"/>
    <property type="project" value="GO_Central"/>
</dbReference>
<dbReference type="CDD" id="cd06727">
    <property type="entry name" value="PDZ1_ZO1-like"/>
    <property type="match status" value="1"/>
</dbReference>
<dbReference type="CDD" id="cd06728">
    <property type="entry name" value="PDZ2_ZO1-like_ds"/>
    <property type="match status" value="1"/>
</dbReference>
<dbReference type="CDD" id="cd06729">
    <property type="entry name" value="PDZ3_ZO1-like_domain"/>
    <property type="match status" value="1"/>
</dbReference>
<dbReference type="CDD" id="cd12026">
    <property type="entry name" value="SH3_ZO-1"/>
    <property type="match status" value="1"/>
</dbReference>
<dbReference type="FunFam" id="2.30.42.10:FF:000009">
    <property type="entry name" value="Putative tight junction protein ZO-1"/>
    <property type="match status" value="1"/>
</dbReference>
<dbReference type="FunFam" id="2.30.42.10:FF:000013">
    <property type="entry name" value="Putative tight junction protein ZO-1"/>
    <property type="match status" value="1"/>
</dbReference>
<dbReference type="FunFam" id="2.60.220.30:FF:000004">
    <property type="entry name" value="tight junction protein ZO-1 isoform X1"/>
    <property type="match status" value="1"/>
</dbReference>
<dbReference type="FunFam" id="3.40.50.300:FF:000110">
    <property type="entry name" value="tight junction protein ZO-1 isoform X1"/>
    <property type="match status" value="1"/>
</dbReference>
<dbReference type="FunFam" id="2.30.42.10:FF:000170">
    <property type="entry name" value="tight junction protein ZO-1 isoform X2"/>
    <property type="match status" value="1"/>
</dbReference>
<dbReference type="Gene3D" id="2.30.42.10">
    <property type="match status" value="3"/>
</dbReference>
<dbReference type="Gene3D" id="2.60.220.30">
    <property type="match status" value="1"/>
</dbReference>
<dbReference type="Gene3D" id="3.40.50.300">
    <property type="entry name" value="P-loop containing nucleotide triphosphate hydrolases"/>
    <property type="match status" value="1"/>
</dbReference>
<dbReference type="Gene3D" id="2.30.30.40">
    <property type="entry name" value="SH3 Domains"/>
    <property type="match status" value="1"/>
</dbReference>
<dbReference type="InterPro" id="IPR008145">
    <property type="entry name" value="GK/Ca_channel_bsu"/>
</dbReference>
<dbReference type="InterPro" id="IPR008144">
    <property type="entry name" value="Guanylate_kin-like_dom"/>
</dbReference>
<dbReference type="InterPro" id="IPR027417">
    <property type="entry name" value="P-loop_NTPase"/>
</dbReference>
<dbReference type="InterPro" id="IPR001478">
    <property type="entry name" value="PDZ"/>
</dbReference>
<dbReference type="InterPro" id="IPR036034">
    <property type="entry name" value="PDZ_sf"/>
</dbReference>
<dbReference type="InterPro" id="IPR036028">
    <property type="entry name" value="SH3-like_dom_sf"/>
</dbReference>
<dbReference type="InterPro" id="IPR001452">
    <property type="entry name" value="SH3_domain"/>
</dbReference>
<dbReference type="InterPro" id="IPR005417">
    <property type="entry name" value="ZO"/>
</dbReference>
<dbReference type="InterPro" id="IPR005418">
    <property type="entry name" value="ZO-1"/>
</dbReference>
<dbReference type="InterPro" id="IPR035597">
    <property type="entry name" value="ZO-1_SH3"/>
</dbReference>
<dbReference type="InterPro" id="IPR000906">
    <property type="entry name" value="ZU5_dom"/>
</dbReference>
<dbReference type="PANTHER" id="PTHR13865">
    <property type="entry name" value="TIGHT JUNCTION PROTEIN"/>
    <property type="match status" value="1"/>
</dbReference>
<dbReference type="PANTHER" id="PTHR13865:SF25">
    <property type="entry name" value="TIGHT JUNCTION PROTEIN ZO-1"/>
    <property type="match status" value="1"/>
</dbReference>
<dbReference type="Pfam" id="PF00625">
    <property type="entry name" value="Guanylate_kin"/>
    <property type="match status" value="1"/>
</dbReference>
<dbReference type="Pfam" id="PF00595">
    <property type="entry name" value="PDZ"/>
    <property type="match status" value="3"/>
</dbReference>
<dbReference type="Pfam" id="PF07653">
    <property type="entry name" value="SH3_2"/>
    <property type="match status" value="1"/>
</dbReference>
<dbReference type="Pfam" id="PF00791">
    <property type="entry name" value="ZU5"/>
    <property type="match status" value="1"/>
</dbReference>
<dbReference type="PRINTS" id="PR01597">
    <property type="entry name" value="ZONOCCLUDNS"/>
</dbReference>
<dbReference type="PRINTS" id="PR01598">
    <property type="entry name" value="ZONOCCLUDNS1"/>
</dbReference>
<dbReference type="SMART" id="SM00072">
    <property type="entry name" value="GuKc"/>
    <property type="match status" value="1"/>
</dbReference>
<dbReference type="SMART" id="SM00228">
    <property type="entry name" value="PDZ"/>
    <property type="match status" value="3"/>
</dbReference>
<dbReference type="SMART" id="SM00218">
    <property type="entry name" value="ZU5"/>
    <property type="match status" value="1"/>
</dbReference>
<dbReference type="SUPFAM" id="SSF52540">
    <property type="entry name" value="P-loop containing nucleoside triphosphate hydrolases"/>
    <property type="match status" value="1"/>
</dbReference>
<dbReference type="SUPFAM" id="SSF50156">
    <property type="entry name" value="PDZ domain-like"/>
    <property type="match status" value="3"/>
</dbReference>
<dbReference type="SUPFAM" id="SSF50044">
    <property type="entry name" value="SH3-domain"/>
    <property type="match status" value="1"/>
</dbReference>
<dbReference type="PROSITE" id="PS50052">
    <property type="entry name" value="GUANYLATE_KINASE_2"/>
    <property type="match status" value="1"/>
</dbReference>
<dbReference type="PROSITE" id="PS50106">
    <property type="entry name" value="PDZ"/>
    <property type="match status" value="3"/>
</dbReference>
<dbReference type="PROSITE" id="PS50002">
    <property type="entry name" value="SH3"/>
    <property type="match status" value="1"/>
</dbReference>
<dbReference type="PROSITE" id="PS51145">
    <property type="entry name" value="ZU5"/>
    <property type="match status" value="1"/>
</dbReference>
<proteinExistence type="evidence at protein level"/>